<keyword id="KW-0687">Ribonucleoprotein</keyword>
<keyword id="KW-0689">Ribosomal protein</keyword>
<keyword id="KW-0694">RNA-binding</keyword>
<keyword id="KW-0699">rRNA-binding</keyword>
<evidence type="ECO:0000255" key="1">
    <source>
        <dbReference type="HAMAP-Rule" id="MF_00270"/>
    </source>
</evidence>
<evidence type="ECO:0000305" key="2"/>
<reference key="1">
    <citation type="submission" date="2007-04" db="EMBL/GenBank/DDBJ databases">
        <title>Complete sequence of Pseudomonas mendocina ymp.</title>
        <authorList>
            <consortium name="US DOE Joint Genome Institute"/>
            <person name="Copeland A."/>
            <person name="Lucas S."/>
            <person name="Lapidus A."/>
            <person name="Barry K."/>
            <person name="Glavina del Rio T."/>
            <person name="Dalin E."/>
            <person name="Tice H."/>
            <person name="Pitluck S."/>
            <person name="Kiss H."/>
            <person name="Brettin T."/>
            <person name="Detter J.C."/>
            <person name="Bruce D."/>
            <person name="Han C."/>
            <person name="Schmutz J."/>
            <person name="Larimer F."/>
            <person name="Land M."/>
            <person name="Hauser L."/>
            <person name="Kyrpides N."/>
            <person name="Mikhailova N."/>
            <person name="Hersman L."/>
            <person name="Dubois J."/>
            <person name="Maurice P."/>
            <person name="Richardson P."/>
        </authorList>
    </citation>
    <scope>NUCLEOTIDE SEQUENCE [LARGE SCALE GENOMIC DNA]</scope>
    <source>
        <strain>ymp</strain>
    </source>
</reference>
<feature type="chain" id="PRO_1000003571" description="Small ribosomal subunit protein bS18">
    <location>
        <begin position="1"/>
        <end position="76"/>
    </location>
</feature>
<dbReference type="EMBL" id="CP000680">
    <property type="protein sequence ID" value="ABP83414.1"/>
    <property type="molecule type" value="Genomic_DNA"/>
</dbReference>
<dbReference type="SMR" id="A4XPZ8"/>
<dbReference type="STRING" id="399739.Pmen_0646"/>
<dbReference type="KEGG" id="pmy:Pmen_0646"/>
<dbReference type="eggNOG" id="COG0238">
    <property type="taxonomic scope" value="Bacteria"/>
</dbReference>
<dbReference type="HOGENOM" id="CLU_148710_2_3_6"/>
<dbReference type="OrthoDB" id="9812008at2"/>
<dbReference type="GO" id="GO:0022627">
    <property type="term" value="C:cytosolic small ribosomal subunit"/>
    <property type="evidence" value="ECO:0007669"/>
    <property type="project" value="TreeGrafter"/>
</dbReference>
<dbReference type="GO" id="GO:0070181">
    <property type="term" value="F:small ribosomal subunit rRNA binding"/>
    <property type="evidence" value="ECO:0007669"/>
    <property type="project" value="TreeGrafter"/>
</dbReference>
<dbReference type="GO" id="GO:0003735">
    <property type="term" value="F:structural constituent of ribosome"/>
    <property type="evidence" value="ECO:0007669"/>
    <property type="project" value="InterPro"/>
</dbReference>
<dbReference type="GO" id="GO:0006412">
    <property type="term" value="P:translation"/>
    <property type="evidence" value="ECO:0007669"/>
    <property type="project" value="UniProtKB-UniRule"/>
</dbReference>
<dbReference type="FunFam" id="4.10.640.10:FF:000001">
    <property type="entry name" value="30S ribosomal protein S18"/>
    <property type="match status" value="1"/>
</dbReference>
<dbReference type="Gene3D" id="4.10.640.10">
    <property type="entry name" value="Ribosomal protein S18"/>
    <property type="match status" value="1"/>
</dbReference>
<dbReference type="HAMAP" id="MF_00270">
    <property type="entry name" value="Ribosomal_bS18"/>
    <property type="match status" value="1"/>
</dbReference>
<dbReference type="InterPro" id="IPR001648">
    <property type="entry name" value="Ribosomal_bS18"/>
</dbReference>
<dbReference type="InterPro" id="IPR018275">
    <property type="entry name" value="Ribosomal_bS18_CS"/>
</dbReference>
<dbReference type="InterPro" id="IPR036870">
    <property type="entry name" value="Ribosomal_bS18_sf"/>
</dbReference>
<dbReference type="NCBIfam" id="TIGR00165">
    <property type="entry name" value="S18"/>
    <property type="match status" value="1"/>
</dbReference>
<dbReference type="PANTHER" id="PTHR13479">
    <property type="entry name" value="30S RIBOSOMAL PROTEIN S18"/>
    <property type="match status" value="1"/>
</dbReference>
<dbReference type="PANTHER" id="PTHR13479:SF40">
    <property type="entry name" value="SMALL RIBOSOMAL SUBUNIT PROTEIN BS18M"/>
    <property type="match status" value="1"/>
</dbReference>
<dbReference type="Pfam" id="PF01084">
    <property type="entry name" value="Ribosomal_S18"/>
    <property type="match status" value="1"/>
</dbReference>
<dbReference type="PRINTS" id="PR00974">
    <property type="entry name" value="RIBOSOMALS18"/>
</dbReference>
<dbReference type="SUPFAM" id="SSF46911">
    <property type="entry name" value="Ribosomal protein S18"/>
    <property type="match status" value="1"/>
</dbReference>
<dbReference type="PROSITE" id="PS00057">
    <property type="entry name" value="RIBOSOMAL_S18"/>
    <property type="match status" value="1"/>
</dbReference>
<sequence>MARFFRRRKFCRFTAEDVKEIDFKDLNTLKAYISETGKIVPSRITGTKARYQRQLATAIKRARFLALLPYTDSHGR</sequence>
<gene>
    <name evidence="1" type="primary">rpsR</name>
    <name type="ordered locus">Pmen_0646</name>
</gene>
<organism>
    <name type="scientific">Ectopseudomonas mendocina (strain ymp)</name>
    <name type="common">Pseudomonas mendocina</name>
    <dbReference type="NCBI Taxonomy" id="399739"/>
    <lineage>
        <taxon>Bacteria</taxon>
        <taxon>Pseudomonadati</taxon>
        <taxon>Pseudomonadota</taxon>
        <taxon>Gammaproteobacteria</taxon>
        <taxon>Pseudomonadales</taxon>
        <taxon>Pseudomonadaceae</taxon>
        <taxon>Ectopseudomonas</taxon>
    </lineage>
</organism>
<name>RS18_ECTM1</name>
<comment type="function">
    <text evidence="1">Binds as a heterodimer with protein bS6 to the central domain of the 16S rRNA, where it helps stabilize the platform of the 30S subunit.</text>
</comment>
<comment type="subunit">
    <text evidence="1">Part of the 30S ribosomal subunit. Forms a tight heterodimer with protein bS6.</text>
</comment>
<comment type="similarity">
    <text evidence="1">Belongs to the bacterial ribosomal protein bS18 family.</text>
</comment>
<protein>
    <recommendedName>
        <fullName evidence="1">Small ribosomal subunit protein bS18</fullName>
    </recommendedName>
    <alternativeName>
        <fullName evidence="2">30S ribosomal protein S18</fullName>
    </alternativeName>
</protein>
<proteinExistence type="inferred from homology"/>
<accession>A4XPZ8</accession>